<dbReference type="EC" id="6.3.2.1" evidence="1"/>
<dbReference type="EMBL" id="CP000614">
    <property type="protein sequence ID" value="ABO55524.1"/>
    <property type="molecule type" value="Genomic_DNA"/>
</dbReference>
<dbReference type="SMR" id="A4JGX1"/>
<dbReference type="KEGG" id="bvi:Bcep1808_2526"/>
<dbReference type="eggNOG" id="COG0414">
    <property type="taxonomic scope" value="Bacteria"/>
</dbReference>
<dbReference type="HOGENOM" id="CLU_047148_0_0_4"/>
<dbReference type="UniPathway" id="UPA00028">
    <property type="reaction ID" value="UER00005"/>
</dbReference>
<dbReference type="Proteomes" id="UP000002287">
    <property type="component" value="Chromosome 1"/>
</dbReference>
<dbReference type="GO" id="GO:0005829">
    <property type="term" value="C:cytosol"/>
    <property type="evidence" value="ECO:0007669"/>
    <property type="project" value="TreeGrafter"/>
</dbReference>
<dbReference type="GO" id="GO:0005524">
    <property type="term" value="F:ATP binding"/>
    <property type="evidence" value="ECO:0007669"/>
    <property type="project" value="UniProtKB-KW"/>
</dbReference>
<dbReference type="GO" id="GO:0004592">
    <property type="term" value="F:pantoate-beta-alanine ligase activity"/>
    <property type="evidence" value="ECO:0007669"/>
    <property type="project" value="UniProtKB-UniRule"/>
</dbReference>
<dbReference type="GO" id="GO:0015940">
    <property type="term" value="P:pantothenate biosynthetic process"/>
    <property type="evidence" value="ECO:0007669"/>
    <property type="project" value="UniProtKB-UniRule"/>
</dbReference>
<dbReference type="CDD" id="cd00560">
    <property type="entry name" value="PanC"/>
    <property type="match status" value="1"/>
</dbReference>
<dbReference type="Gene3D" id="3.40.50.620">
    <property type="entry name" value="HUPs"/>
    <property type="match status" value="1"/>
</dbReference>
<dbReference type="Gene3D" id="3.30.1300.10">
    <property type="entry name" value="Pantoate-beta-alanine ligase, C-terminal domain"/>
    <property type="match status" value="1"/>
</dbReference>
<dbReference type="HAMAP" id="MF_00158">
    <property type="entry name" value="PanC"/>
    <property type="match status" value="1"/>
</dbReference>
<dbReference type="InterPro" id="IPR004821">
    <property type="entry name" value="Cyt_trans-like"/>
</dbReference>
<dbReference type="InterPro" id="IPR003721">
    <property type="entry name" value="Pantoate_ligase"/>
</dbReference>
<dbReference type="InterPro" id="IPR042176">
    <property type="entry name" value="Pantoate_ligase_C"/>
</dbReference>
<dbReference type="InterPro" id="IPR014729">
    <property type="entry name" value="Rossmann-like_a/b/a_fold"/>
</dbReference>
<dbReference type="NCBIfam" id="TIGR00125">
    <property type="entry name" value="cyt_tran_rel"/>
    <property type="match status" value="1"/>
</dbReference>
<dbReference type="NCBIfam" id="TIGR00018">
    <property type="entry name" value="panC"/>
    <property type="match status" value="1"/>
</dbReference>
<dbReference type="PANTHER" id="PTHR21299">
    <property type="entry name" value="CYTIDYLATE KINASE/PANTOATE-BETA-ALANINE LIGASE"/>
    <property type="match status" value="1"/>
</dbReference>
<dbReference type="PANTHER" id="PTHR21299:SF1">
    <property type="entry name" value="PANTOATE--BETA-ALANINE LIGASE"/>
    <property type="match status" value="1"/>
</dbReference>
<dbReference type="Pfam" id="PF02569">
    <property type="entry name" value="Pantoate_ligase"/>
    <property type="match status" value="1"/>
</dbReference>
<dbReference type="SUPFAM" id="SSF52374">
    <property type="entry name" value="Nucleotidylyl transferase"/>
    <property type="match status" value="1"/>
</dbReference>
<organism>
    <name type="scientific">Burkholderia vietnamiensis (strain G4 / LMG 22486)</name>
    <name type="common">Burkholderia cepacia (strain R1808)</name>
    <dbReference type="NCBI Taxonomy" id="269482"/>
    <lineage>
        <taxon>Bacteria</taxon>
        <taxon>Pseudomonadati</taxon>
        <taxon>Pseudomonadota</taxon>
        <taxon>Betaproteobacteria</taxon>
        <taxon>Burkholderiales</taxon>
        <taxon>Burkholderiaceae</taxon>
        <taxon>Burkholderia</taxon>
        <taxon>Burkholderia cepacia complex</taxon>
    </lineage>
</organism>
<accession>A4JGX1</accession>
<reference key="1">
    <citation type="submission" date="2007-03" db="EMBL/GenBank/DDBJ databases">
        <title>Complete sequence of chromosome 1 of Burkholderia vietnamiensis G4.</title>
        <authorList>
            <consortium name="US DOE Joint Genome Institute"/>
            <person name="Copeland A."/>
            <person name="Lucas S."/>
            <person name="Lapidus A."/>
            <person name="Barry K."/>
            <person name="Detter J.C."/>
            <person name="Glavina del Rio T."/>
            <person name="Hammon N."/>
            <person name="Israni S."/>
            <person name="Dalin E."/>
            <person name="Tice H."/>
            <person name="Pitluck S."/>
            <person name="Chain P."/>
            <person name="Malfatti S."/>
            <person name="Shin M."/>
            <person name="Vergez L."/>
            <person name="Schmutz J."/>
            <person name="Larimer F."/>
            <person name="Land M."/>
            <person name="Hauser L."/>
            <person name="Kyrpides N."/>
            <person name="Tiedje J."/>
            <person name="Richardson P."/>
        </authorList>
    </citation>
    <scope>NUCLEOTIDE SEQUENCE [LARGE SCALE GENOMIC DNA]</scope>
    <source>
        <strain>G4 / LMG 22486</strain>
    </source>
</reference>
<name>PANC_BURVG</name>
<comment type="function">
    <text evidence="1">Catalyzes the condensation of pantoate with beta-alanine in an ATP-dependent reaction via a pantoyl-adenylate intermediate.</text>
</comment>
<comment type="catalytic activity">
    <reaction evidence="1">
        <text>(R)-pantoate + beta-alanine + ATP = (R)-pantothenate + AMP + diphosphate + H(+)</text>
        <dbReference type="Rhea" id="RHEA:10912"/>
        <dbReference type="ChEBI" id="CHEBI:15378"/>
        <dbReference type="ChEBI" id="CHEBI:15980"/>
        <dbReference type="ChEBI" id="CHEBI:29032"/>
        <dbReference type="ChEBI" id="CHEBI:30616"/>
        <dbReference type="ChEBI" id="CHEBI:33019"/>
        <dbReference type="ChEBI" id="CHEBI:57966"/>
        <dbReference type="ChEBI" id="CHEBI:456215"/>
        <dbReference type="EC" id="6.3.2.1"/>
    </reaction>
</comment>
<comment type="pathway">
    <text evidence="1">Cofactor biosynthesis; (R)-pantothenate biosynthesis; (R)-pantothenate from (R)-pantoate and beta-alanine: step 1/1.</text>
</comment>
<comment type="subunit">
    <text evidence="1">Homodimer.</text>
</comment>
<comment type="subcellular location">
    <subcellularLocation>
        <location evidence="1">Cytoplasm</location>
    </subcellularLocation>
</comment>
<comment type="miscellaneous">
    <text evidence="1">The reaction proceeds by a bi uni uni bi ping pong mechanism.</text>
</comment>
<comment type="similarity">
    <text evidence="1">Belongs to the pantothenate synthetase family.</text>
</comment>
<keyword id="KW-0067">ATP-binding</keyword>
<keyword id="KW-0963">Cytoplasm</keyword>
<keyword id="KW-0436">Ligase</keyword>
<keyword id="KW-0547">Nucleotide-binding</keyword>
<keyword id="KW-0566">Pantothenate biosynthesis</keyword>
<protein>
    <recommendedName>
        <fullName evidence="1">Pantothenate synthetase</fullName>
        <shortName evidence="1">PS</shortName>
        <ecNumber evidence="1">6.3.2.1</ecNumber>
    </recommendedName>
    <alternativeName>
        <fullName evidence="1">Pantoate--beta-alanine ligase</fullName>
    </alternativeName>
    <alternativeName>
        <fullName evidence="1">Pantoate-activating enzyme</fullName>
    </alternativeName>
</protein>
<sequence length="279" mass="31399">MKVISSIQELRDQLRGQNRTAFVPTMGNLHEGHLSLMRLARQHGDPVVASIFVNRLQFGPNEDFDKYPRTLQDDIEKLQNENVYVLFAPTERDMYPEPQEYRVLPPDDLGGILEGEFRPGFFAGVCTVVTKLMSCVQPRVAVFGKKDYQQLMIVRRMCQQLALPVEIIAAETVRDEDGLALSSRNRYLTADERTEAPELVKTLQRVRESVLGGERDLGKLEQHARAHLAERGWAPDYIAIRRRANLIAPSAAELEAGEPLVVLAAAKLGATRLIDNLEI</sequence>
<feature type="chain" id="PRO_1000097043" description="Pantothenate synthetase">
    <location>
        <begin position="1"/>
        <end position="279"/>
    </location>
</feature>
<feature type="active site" description="Proton donor" evidence="1">
    <location>
        <position position="33"/>
    </location>
</feature>
<feature type="binding site" evidence="1">
    <location>
        <begin position="26"/>
        <end position="33"/>
    </location>
    <ligand>
        <name>ATP</name>
        <dbReference type="ChEBI" id="CHEBI:30616"/>
    </ligand>
</feature>
<feature type="binding site" evidence="1">
    <location>
        <position position="57"/>
    </location>
    <ligand>
        <name>(R)-pantoate</name>
        <dbReference type="ChEBI" id="CHEBI:15980"/>
    </ligand>
</feature>
<feature type="binding site" evidence="1">
    <location>
        <position position="57"/>
    </location>
    <ligand>
        <name>beta-alanine</name>
        <dbReference type="ChEBI" id="CHEBI:57966"/>
    </ligand>
</feature>
<feature type="binding site" evidence="1">
    <location>
        <begin position="144"/>
        <end position="147"/>
    </location>
    <ligand>
        <name>ATP</name>
        <dbReference type="ChEBI" id="CHEBI:30616"/>
    </ligand>
</feature>
<feature type="binding site" evidence="1">
    <location>
        <position position="150"/>
    </location>
    <ligand>
        <name>(R)-pantoate</name>
        <dbReference type="ChEBI" id="CHEBI:15980"/>
    </ligand>
</feature>
<feature type="binding site" evidence="1">
    <location>
        <position position="173"/>
    </location>
    <ligand>
        <name>ATP</name>
        <dbReference type="ChEBI" id="CHEBI:30616"/>
    </ligand>
</feature>
<feature type="binding site" evidence="1">
    <location>
        <begin position="181"/>
        <end position="184"/>
    </location>
    <ligand>
        <name>ATP</name>
        <dbReference type="ChEBI" id="CHEBI:30616"/>
    </ligand>
</feature>
<gene>
    <name evidence="1" type="primary">panC</name>
    <name type="ordered locus">Bcep1808_2526</name>
</gene>
<proteinExistence type="inferred from homology"/>
<evidence type="ECO:0000255" key="1">
    <source>
        <dbReference type="HAMAP-Rule" id="MF_00158"/>
    </source>
</evidence>